<gene>
    <name evidence="1" type="primary">azoR</name>
    <name type="ordered locus">SAUSA300_0206</name>
</gene>
<keyword id="KW-0285">Flavoprotein</keyword>
<keyword id="KW-0288">FMN</keyword>
<keyword id="KW-0520">NAD</keyword>
<keyword id="KW-0560">Oxidoreductase</keyword>
<reference key="1">
    <citation type="journal article" date="2006" name="Lancet">
        <title>Complete genome sequence of USA300, an epidemic clone of community-acquired meticillin-resistant Staphylococcus aureus.</title>
        <authorList>
            <person name="Diep B.A."/>
            <person name="Gill S.R."/>
            <person name="Chang R.F."/>
            <person name="Phan T.H."/>
            <person name="Chen J.H."/>
            <person name="Davidson M.G."/>
            <person name="Lin F."/>
            <person name="Lin J."/>
            <person name="Carleton H.A."/>
            <person name="Mongodin E.F."/>
            <person name="Sensabaugh G.F."/>
            <person name="Perdreau-Remington F."/>
        </authorList>
    </citation>
    <scope>NUCLEOTIDE SEQUENCE [LARGE SCALE GENOMIC DNA]</scope>
    <source>
        <strain>USA300</strain>
    </source>
</reference>
<accession>Q2FK58</accession>
<proteinExistence type="inferred from homology"/>
<protein>
    <recommendedName>
        <fullName evidence="1">FMN-dependent NADH:quinone oxidoreductase</fullName>
        <ecNumber evidence="1">1.6.5.-</ecNumber>
    </recommendedName>
    <alternativeName>
        <fullName evidence="1">Azo-dye reductase</fullName>
    </alternativeName>
    <alternativeName>
        <fullName evidence="1">FMN-dependent NADH-azo compound oxidoreductase</fullName>
    </alternativeName>
    <alternativeName>
        <fullName evidence="1">FMN-dependent NADH-azoreductase</fullName>
        <ecNumber evidence="1">1.7.1.17</ecNumber>
    </alternativeName>
</protein>
<organism>
    <name type="scientific">Staphylococcus aureus (strain USA300)</name>
    <dbReference type="NCBI Taxonomy" id="367830"/>
    <lineage>
        <taxon>Bacteria</taxon>
        <taxon>Bacillati</taxon>
        <taxon>Bacillota</taxon>
        <taxon>Bacilli</taxon>
        <taxon>Bacillales</taxon>
        <taxon>Staphylococcaceae</taxon>
        <taxon>Staphylococcus</taxon>
    </lineage>
</organism>
<evidence type="ECO:0000255" key="1">
    <source>
        <dbReference type="HAMAP-Rule" id="MF_01216"/>
    </source>
</evidence>
<comment type="function">
    <text evidence="1">Quinone reductase that provides resistance to thiol-specific stress caused by electrophilic quinones.</text>
</comment>
<comment type="function">
    <text evidence="1">Also exhibits azoreductase activity. Catalyzes the reductive cleavage of the azo bond in aromatic azo compounds to the corresponding amines.</text>
</comment>
<comment type="catalytic activity">
    <reaction evidence="1">
        <text>2 a quinone + NADH + H(+) = 2 a 1,4-benzosemiquinone + NAD(+)</text>
        <dbReference type="Rhea" id="RHEA:65952"/>
        <dbReference type="ChEBI" id="CHEBI:15378"/>
        <dbReference type="ChEBI" id="CHEBI:57540"/>
        <dbReference type="ChEBI" id="CHEBI:57945"/>
        <dbReference type="ChEBI" id="CHEBI:132124"/>
        <dbReference type="ChEBI" id="CHEBI:134225"/>
    </reaction>
</comment>
<comment type="catalytic activity">
    <reaction evidence="1">
        <text>N,N-dimethyl-1,4-phenylenediamine + anthranilate + 2 NAD(+) = 2-(4-dimethylaminophenyl)diazenylbenzoate + 2 NADH + 2 H(+)</text>
        <dbReference type="Rhea" id="RHEA:55872"/>
        <dbReference type="ChEBI" id="CHEBI:15378"/>
        <dbReference type="ChEBI" id="CHEBI:15783"/>
        <dbReference type="ChEBI" id="CHEBI:16567"/>
        <dbReference type="ChEBI" id="CHEBI:57540"/>
        <dbReference type="ChEBI" id="CHEBI:57945"/>
        <dbReference type="ChEBI" id="CHEBI:71579"/>
        <dbReference type="EC" id="1.7.1.17"/>
    </reaction>
</comment>
<comment type="cofactor">
    <cofactor evidence="1">
        <name>FMN</name>
        <dbReference type="ChEBI" id="CHEBI:58210"/>
    </cofactor>
    <text evidence="1">Binds 1 FMN per subunit.</text>
</comment>
<comment type="subunit">
    <text evidence="1">Homodimer.</text>
</comment>
<comment type="similarity">
    <text evidence="1">Belongs to the azoreductase type 1 family.</text>
</comment>
<sequence length="208" mass="23353">MAKVLYITAHPFNELVSNSMAAGKAFIETYQQQHPDDEVKHIDLFETYIPVIDKDVLTGWGKMSNGETLTDDEQMKVSRLSDILEEFLSADKYVFVTPMWNLSFPPVVKAYIDAISIAGKTFKYSAEGPQGLLTDKKVLHIQSRGGYYTEGPAADFEMGDRYLRTIMTFLGVPSYETIIIEGHNAEPHKTEEIKATSINNAEKLATTF</sequence>
<name>AZOR_STAA3</name>
<dbReference type="EC" id="1.6.5.-" evidence="1"/>
<dbReference type="EC" id="1.7.1.17" evidence="1"/>
<dbReference type="EMBL" id="CP000255">
    <property type="protein sequence ID" value="ABD21328.1"/>
    <property type="molecule type" value="Genomic_DNA"/>
</dbReference>
<dbReference type="RefSeq" id="WP_001151451.1">
    <property type="nucleotide sequence ID" value="NZ_CP027476.1"/>
</dbReference>
<dbReference type="SMR" id="Q2FK58"/>
<dbReference type="KEGG" id="saa:SAUSA300_0206"/>
<dbReference type="HOGENOM" id="CLU_088964_3_1_9"/>
<dbReference type="OMA" id="FIARPRV"/>
<dbReference type="Proteomes" id="UP000001939">
    <property type="component" value="Chromosome"/>
</dbReference>
<dbReference type="GO" id="GO:0009055">
    <property type="term" value="F:electron transfer activity"/>
    <property type="evidence" value="ECO:0007669"/>
    <property type="project" value="UniProtKB-UniRule"/>
</dbReference>
<dbReference type="GO" id="GO:0010181">
    <property type="term" value="F:FMN binding"/>
    <property type="evidence" value="ECO:0007669"/>
    <property type="project" value="UniProtKB-UniRule"/>
</dbReference>
<dbReference type="GO" id="GO:0016652">
    <property type="term" value="F:oxidoreductase activity, acting on NAD(P)H as acceptor"/>
    <property type="evidence" value="ECO:0007669"/>
    <property type="project" value="UniProtKB-UniRule"/>
</dbReference>
<dbReference type="GO" id="GO:0016655">
    <property type="term" value="F:oxidoreductase activity, acting on NAD(P)H, quinone or similar compound as acceptor"/>
    <property type="evidence" value="ECO:0007669"/>
    <property type="project" value="InterPro"/>
</dbReference>
<dbReference type="Gene3D" id="3.40.50.360">
    <property type="match status" value="1"/>
</dbReference>
<dbReference type="HAMAP" id="MF_01216">
    <property type="entry name" value="Azoreductase_type1"/>
    <property type="match status" value="1"/>
</dbReference>
<dbReference type="InterPro" id="IPR003680">
    <property type="entry name" value="Flavodoxin_fold"/>
</dbReference>
<dbReference type="InterPro" id="IPR029039">
    <property type="entry name" value="Flavoprotein-like_sf"/>
</dbReference>
<dbReference type="InterPro" id="IPR050104">
    <property type="entry name" value="FMN-dep_NADH:Q_OxRdtase_AzoR1"/>
</dbReference>
<dbReference type="InterPro" id="IPR023048">
    <property type="entry name" value="NADH:quinone_OxRdtase_FMN_depd"/>
</dbReference>
<dbReference type="NCBIfam" id="NF010075">
    <property type="entry name" value="PRK13556.1"/>
    <property type="match status" value="1"/>
</dbReference>
<dbReference type="PANTHER" id="PTHR43741">
    <property type="entry name" value="FMN-DEPENDENT NADH-AZOREDUCTASE 1"/>
    <property type="match status" value="1"/>
</dbReference>
<dbReference type="PANTHER" id="PTHR43741:SF7">
    <property type="entry name" value="FMN-DEPENDENT NADH:QUINONE OXIDOREDUCTASE"/>
    <property type="match status" value="1"/>
</dbReference>
<dbReference type="Pfam" id="PF02525">
    <property type="entry name" value="Flavodoxin_2"/>
    <property type="match status" value="1"/>
</dbReference>
<dbReference type="SUPFAM" id="SSF52218">
    <property type="entry name" value="Flavoproteins"/>
    <property type="match status" value="1"/>
</dbReference>
<feature type="chain" id="PRO_0000245977" description="FMN-dependent NADH:quinone oxidoreductase">
    <location>
        <begin position="1"/>
        <end position="208"/>
    </location>
</feature>
<feature type="binding site" evidence="1">
    <location>
        <begin position="17"/>
        <end position="19"/>
    </location>
    <ligand>
        <name>FMN</name>
        <dbReference type="ChEBI" id="CHEBI:58210"/>
    </ligand>
</feature>
<feature type="binding site" evidence="1">
    <location>
        <begin position="99"/>
        <end position="102"/>
    </location>
    <ligand>
        <name>FMN</name>
        <dbReference type="ChEBI" id="CHEBI:58210"/>
    </ligand>
</feature>
<feature type="binding site" evidence="1">
    <location>
        <begin position="143"/>
        <end position="146"/>
    </location>
    <ligand>
        <name>FMN</name>
        <dbReference type="ChEBI" id="CHEBI:58210"/>
    </ligand>
</feature>